<gene>
    <name type="primary">MVP1</name>
    <name type="ordered locus">CNBF1250</name>
</gene>
<protein>
    <recommendedName>
        <fullName>Sorting nexin MVP1</fullName>
    </recommendedName>
</protein>
<keyword id="KW-0963">Cytoplasm</keyword>
<keyword id="KW-0472">Membrane</keyword>
<keyword id="KW-0653">Protein transport</keyword>
<keyword id="KW-0813">Transport</keyword>
<dbReference type="EMBL" id="AAEY01000030">
    <property type="protein sequence ID" value="EAL20314.1"/>
    <property type="molecule type" value="Genomic_DNA"/>
</dbReference>
<dbReference type="RefSeq" id="XP_774961.1">
    <property type="nucleotide sequence ID" value="XM_769868.1"/>
</dbReference>
<dbReference type="SMR" id="P0CR59"/>
<dbReference type="EnsemblFungi" id="AAW44126">
    <property type="protein sequence ID" value="AAW44126"/>
    <property type="gene ID" value="CNF03550"/>
</dbReference>
<dbReference type="GeneID" id="4936677"/>
<dbReference type="KEGG" id="cnb:CNBF1250"/>
<dbReference type="VEuPathDB" id="FungiDB:CNBF1250"/>
<dbReference type="HOGENOM" id="CLU_009058_1_1_1"/>
<dbReference type="OrthoDB" id="8856at5206"/>
<dbReference type="GO" id="GO:0005829">
    <property type="term" value="C:cytosol"/>
    <property type="evidence" value="ECO:0007669"/>
    <property type="project" value="GOC"/>
</dbReference>
<dbReference type="GO" id="GO:0031901">
    <property type="term" value="C:early endosome membrane"/>
    <property type="evidence" value="ECO:0007669"/>
    <property type="project" value="TreeGrafter"/>
</dbReference>
<dbReference type="GO" id="GO:0035091">
    <property type="term" value="F:phosphatidylinositol binding"/>
    <property type="evidence" value="ECO:0007669"/>
    <property type="project" value="InterPro"/>
</dbReference>
<dbReference type="GO" id="GO:0034498">
    <property type="term" value="P:early endosome to Golgi transport"/>
    <property type="evidence" value="ECO:0007669"/>
    <property type="project" value="TreeGrafter"/>
</dbReference>
<dbReference type="GO" id="GO:0006886">
    <property type="term" value="P:intracellular protein transport"/>
    <property type="evidence" value="ECO:0007669"/>
    <property type="project" value="TreeGrafter"/>
</dbReference>
<dbReference type="CDD" id="cd07597">
    <property type="entry name" value="BAR_SNX8"/>
    <property type="match status" value="1"/>
</dbReference>
<dbReference type="CDD" id="cd06866">
    <property type="entry name" value="PX_SNX8_Mvp1p_like"/>
    <property type="match status" value="1"/>
</dbReference>
<dbReference type="Gene3D" id="1.10.238.10">
    <property type="entry name" value="EF-hand"/>
    <property type="match status" value="1"/>
</dbReference>
<dbReference type="Gene3D" id="3.30.1520.10">
    <property type="entry name" value="Phox-like domain"/>
    <property type="match status" value="1"/>
</dbReference>
<dbReference type="InterPro" id="IPR011992">
    <property type="entry name" value="EF-hand-dom_pair"/>
</dbReference>
<dbReference type="InterPro" id="IPR001683">
    <property type="entry name" value="PX_dom"/>
</dbReference>
<dbReference type="InterPro" id="IPR036871">
    <property type="entry name" value="PX_dom_sf"/>
</dbReference>
<dbReference type="InterPro" id="IPR028662">
    <property type="entry name" value="SNX8/Mvp1"/>
</dbReference>
<dbReference type="InterPro" id="IPR035704">
    <property type="entry name" value="SNX8/Mvp1_PX"/>
</dbReference>
<dbReference type="InterPro" id="IPR045734">
    <property type="entry name" value="Snx8_BAR_dom"/>
</dbReference>
<dbReference type="PANTHER" id="PTHR46571">
    <property type="entry name" value="SORTING NEXIN-8"/>
    <property type="match status" value="1"/>
</dbReference>
<dbReference type="PANTHER" id="PTHR46571:SF1">
    <property type="entry name" value="SORTING NEXIN-8"/>
    <property type="match status" value="1"/>
</dbReference>
<dbReference type="Pfam" id="PF00787">
    <property type="entry name" value="PX"/>
    <property type="match status" value="1"/>
</dbReference>
<dbReference type="Pfam" id="PF19566">
    <property type="entry name" value="Snx8_BAR_dom"/>
    <property type="match status" value="1"/>
</dbReference>
<dbReference type="SMART" id="SM00312">
    <property type="entry name" value="PX"/>
    <property type="match status" value="1"/>
</dbReference>
<dbReference type="SUPFAM" id="SSF47473">
    <property type="entry name" value="EF-hand"/>
    <property type="match status" value="1"/>
</dbReference>
<dbReference type="SUPFAM" id="SSF64268">
    <property type="entry name" value="PX domain"/>
    <property type="match status" value="1"/>
</dbReference>
<dbReference type="PROSITE" id="PS50195">
    <property type="entry name" value="PX"/>
    <property type="match status" value="1"/>
</dbReference>
<evidence type="ECO:0000250" key="1"/>
<evidence type="ECO:0000255" key="2">
    <source>
        <dbReference type="PROSITE-ProRule" id="PRU00147"/>
    </source>
</evidence>
<evidence type="ECO:0000256" key="3">
    <source>
        <dbReference type="SAM" id="MobiDB-lite"/>
    </source>
</evidence>
<evidence type="ECO:0000305" key="4"/>
<accession>P0CR59</accession>
<accession>Q55R65</accession>
<accession>Q5KF05</accession>
<name>MVP1_CRYNB</name>
<sequence length="612" mass="67744">MFNAPRPMASSYSYTDPLSNSAAAGAAFGELDPWSSAPSPAGSVTPARATASASEGRNIAANGNKEEGLNGLINDPPALYVSLLDQLDTSGTGEVSLAAVHRLLGTSKLPAVVVEKIIHLTSRDKSTLTRPEFFCALALVSLAQSSPDPNDISIEKLSFSLSNLPLPKLKPSDPPSVSSGVAASTAAATGFNAWDGTINKGTTYSANNSTFRSTDPMVDNAEDRWWKDQERIVVTLIPEKEGWFLQKYRIESDKRGEGPVARRYSDFVWLMDVLEKRYPFRILPPLPPKRINPSSAFLEARRLALIRLLSFLTAHPVLRTDACLNIFLTSSSFESWRKRTPVSTDEESLSKKLTTAQEMSIPSDLELKLDNLRERLPAMLGHYTRLVVMAERSLVRLQVQAAEAARMAMSTQSIGELVPRCCWRSVQGDDGESGRGVARECGLCEGVGRGWGDVGDGWVSVGEELEKGVQLLQKHIESLKSQRDLYSSFHALFYRHNKLSLDNVDVLRKRVDSRFSKIESLKSAKKPGWEGEVDKLASQSDRDTAEIQRLLARRVFVRACMWHELSVVFHSMQAAQGTMGWKDFVKDQKERTKRLNGVWQGLEETLESMPLE</sequence>
<proteinExistence type="inferred from homology"/>
<reference key="1">
    <citation type="journal article" date="2005" name="Science">
        <title>The genome of the basidiomycetous yeast and human pathogen Cryptococcus neoformans.</title>
        <authorList>
            <person name="Loftus B.J."/>
            <person name="Fung E."/>
            <person name="Roncaglia P."/>
            <person name="Rowley D."/>
            <person name="Amedeo P."/>
            <person name="Bruno D."/>
            <person name="Vamathevan J."/>
            <person name="Miranda M."/>
            <person name="Anderson I.J."/>
            <person name="Fraser J.A."/>
            <person name="Allen J.E."/>
            <person name="Bosdet I.E."/>
            <person name="Brent M.R."/>
            <person name="Chiu R."/>
            <person name="Doering T.L."/>
            <person name="Donlin M.J."/>
            <person name="D'Souza C.A."/>
            <person name="Fox D.S."/>
            <person name="Grinberg V."/>
            <person name="Fu J."/>
            <person name="Fukushima M."/>
            <person name="Haas B.J."/>
            <person name="Huang J.C."/>
            <person name="Janbon G."/>
            <person name="Jones S.J.M."/>
            <person name="Koo H.L."/>
            <person name="Krzywinski M.I."/>
            <person name="Kwon-Chung K.J."/>
            <person name="Lengeler K.B."/>
            <person name="Maiti R."/>
            <person name="Marra M.A."/>
            <person name="Marra R.E."/>
            <person name="Mathewson C.A."/>
            <person name="Mitchell T.G."/>
            <person name="Pertea M."/>
            <person name="Riggs F.R."/>
            <person name="Salzberg S.L."/>
            <person name="Schein J.E."/>
            <person name="Shvartsbeyn A."/>
            <person name="Shin H."/>
            <person name="Shumway M."/>
            <person name="Specht C.A."/>
            <person name="Suh B.B."/>
            <person name="Tenney A."/>
            <person name="Utterback T.R."/>
            <person name="Wickes B.L."/>
            <person name="Wortman J.R."/>
            <person name="Wye N.H."/>
            <person name="Kronstad J.W."/>
            <person name="Lodge J.K."/>
            <person name="Heitman J."/>
            <person name="Davis R.W."/>
            <person name="Fraser C.M."/>
            <person name="Hyman R.W."/>
        </authorList>
    </citation>
    <scope>NUCLEOTIDE SEQUENCE [LARGE SCALE GENOMIC DNA]</scope>
    <source>
        <strain>B-3501A</strain>
    </source>
</reference>
<comment type="function">
    <text evidence="1">Required for vacuolar protein sorting.</text>
</comment>
<comment type="subcellular location">
    <subcellularLocation>
        <location evidence="1">Cytoplasm</location>
    </subcellularLocation>
    <subcellularLocation>
        <location evidence="1">Membrane</location>
        <topology evidence="1">Peripheral membrane protein</topology>
        <orientation evidence="1">Cytoplasmic side</orientation>
    </subcellularLocation>
</comment>
<comment type="domain">
    <text evidence="1">The PX domain binds phosphatidylinositol 3-phosphate which is necessary for peripheral membrane localization.</text>
</comment>
<comment type="similarity">
    <text evidence="4">Belongs to the sorting nexin family.</text>
</comment>
<organism>
    <name type="scientific">Cryptococcus neoformans var. neoformans serotype D (strain B-3501A)</name>
    <name type="common">Filobasidiella neoformans</name>
    <dbReference type="NCBI Taxonomy" id="283643"/>
    <lineage>
        <taxon>Eukaryota</taxon>
        <taxon>Fungi</taxon>
        <taxon>Dikarya</taxon>
        <taxon>Basidiomycota</taxon>
        <taxon>Agaricomycotina</taxon>
        <taxon>Tremellomycetes</taxon>
        <taxon>Tremellales</taxon>
        <taxon>Cryptococcaceae</taxon>
        <taxon>Cryptococcus</taxon>
        <taxon>Cryptococcus neoformans species complex</taxon>
    </lineage>
</organism>
<feature type="chain" id="PRO_0000410291" description="Sorting nexin MVP1">
    <location>
        <begin position="1"/>
        <end position="612"/>
    </location>
</feature>
<feature type="domain" description="PX" evidence="2">
    <location>
        <begin position="226"/>
        <end position="334"/>
    </location>
</feature>
<feature type="region of interest" description="Disordered" evidence="3">
    <location>
        <begin position="35"/>
        <end position="68"/>
    </location>
</feature>
<feature type="binding site" evidence="1">
    <location>
        <position position="263"/>
    </location>
    <ligand>
        <name>a 1,2-diacyl-sn-glycero-3-phospho-(1D-myo-inositol-3-phosphate)</name>
        <dbReference type="ChEBI" id="CHEBI:58088"/>
    </ligand>
</feature>
<feature type="binding site" evidence="1">
    <location>
        <position position="265"/>
    </location>
    <ligand>
        <name>a 1,2-diacyl-sn-glycero-3-phospho-(1D-myo-inositol-3-phosphate)</name>
        <dbReference type="ChEBI" id="CHEBI:58088"/>
    </ligand>
</feature>
<feature type="binding site" evidence="1">
    <location>
        <position position="289"/>
    </location>
    <ligand>
        <name>a 1,2-diacyl-sn-glycero-3-phospho-(1D-myo-inositol-3-phosphate)</name>
        <dbReference type="ChEBI" id="CHEBI:58088"/>
    </ligand>
</feature>
<feature type="binding site" evidence="1">
    <location>
        <position position="301"/>
    </location>
    <ligand>
        <name>a 1,2-diacyl-sn-glycero-3-phospho-(1D-myo-inositol-3-phosphate)</name>
        <dbReference type="ChEBI" id="CHEBI:58088"/>
    </ligand>
</feature>